<dbReference type="EC" id="4.2.1.10" evidence="1"/>
<dbReference type="EMBL" id="AE016826">
    <property type="protein sequence ID" value="AAO27081.1"/>
    <property type="molecule type" value="Genomic_DNA"/>
</dbReference>
<dbReference type="RefSeq" id="WP_011091482.1">
    <property type="nucleotide sequence ID" value="NC_004545.1"/>
</dbReference>
<dbReference type="SMR" id="Q89AE0"/>
<dbReference type="STRING" id="224915.bbp_362"/>
<dbReference type="KEGG" id="bab:bbp_362"/>
<dbReference type="eggNOG" id="COG0757">
    <property type="taxonomic scope" value="Bacteria"/>
</dbReference>
<dbReference type="HOGENOM" id="CLU_090968_1_0_6"/>
<dbReference type="OrthoDB" id="9790793at2"/>
<dbReference type="UniPathway" id="UPA00053">
    <property type="reaction ID" value="UER00086"/>
</dbReference>
<dbReference type="Proteomes" id="UP000000601">
    <property type="component" value="Chromosome"/>
</dbReference>
<dbReference type="GO" id="GO:0003855">
    <property type="term" value="F:3-dehydroquinate dehydratase activity"/>
    <property type="evidence" value="ECO:0007669"/>
    <property type="project" value="UniProtKB-UniRule"/>
</dbReference>
<dbReference type="GO" id="GO:0008652">
    <property type="term" value="P:amino acid biosynthetic process"/>
    <property type="evidence" value="ECO:0007669"/>
    <property type="project" value="UniProtKB-KW"/>
</dbReference>
<dbReference type="GO" id="GO:0009073">
    <property type="term" value="P:aromatic amino acid family biosynthetic process"/>
    <property type="evidence" value="ECO:0007669"/>
    <property type="project" value="UniProtKB-KW"/>
</dbReference>
<dbReference type="GO" id="GO:0009423">
    <property type="term" value="P:chorismate biosynthetic process"/>
    <property type="evidence" value="ECO:0007669"/>
    <property type="project" value="UniProtKB-UniRule"/>
</dbReference>
<dbReference type="GO" id="GO:0019631">
    <property type="term" value="P:quinate catabolic process"/>
    <property type="evidence" value="ECO:0007669"/>
    <property type="project" value="TreeGrafter"/>
</dbReference>
<dbReference type="CDD" id="cd00466">
    <property type="entry name" value="DHQase_II"/>
    <property type="match status" value="1"/>
</dbReference>
<dbReference type="Gene3D" id="3.40.50.9100">
    <property type="entry name" value="Dehydroquinase, class II"/>
    <property type="match status" value="1"/>
</dbReference>
<dbReference type="HAMAP" id="MF_00169">
    <property type="entry name" value="AroQ"/>
    <property type="match status" value="1"/>
</dbReference>
<dbReference type="InterPro" id="IPR001874">
    <property type="entry name" value="DHquinase_II"/>
</dbReference>
<dbReference type="InterPro" id="IPR018509">
    <property type="entry name" value="DHquinase_II_CS"/>
</dbReference>
<dbReference type="InterPro" id="IPR036441">
    <property type="entry name" value="DHquinase_II_sf"/>
</dbReference>
<dbReference type="NCBIfam" id="TIGR01088">
    <property type="entry name" value="aroQ"/>
    <property type="match status" value="1"/>
</dbReference>
<dbReference type="NCBIfam" id="NF003804">
    <property type="entry name" value="PRK05395.1-1"/>
    <property type="match status" value="1"/>
</dbReference>
<dbReference type="NCBIfam" id="NF003805">
    <property type="entry name" value="PRK05395.1-2"/>
    <property type="match status" value="1"/>
</dbReference>
<dbReference type="NCBIfam" id="NF003806">
    <property type="entry name" value="PRK05395.1-3"/>
    <property type="match status" value="1"/>
</dbReference>
<dbReference type="NCBIfam" id="NF003807">
    <property type="entry name" value="PRK05395.1-4"/>
    <property type="match status" value="1"/>
</dbReference>
<dbReference type="PANTHER" id="PTHR21272">
    <property type="entry name" value="CATABOLIC 3-DEHYDROQUINASE"/>
    <property type="match status" value="1"/>
</dbReference>
<dbReference type="PANTHER" id="PTHR21272:SF3">
    <property type="entry name" value="CATABOLIC 3-DEHYDROQUINASE"/>
    <property type="match status" value="1"/>
</dbReference>
<dbReference type="Pfam" id="PF01220">
    <property type="entry name" value="DHquinase_II"/>
    <property type="match status" value="1"/>
</dbReference>
<dbReference type="PIRSF" id="PIRSF001399">
    <property type="entry name" value="DHquinase_II"/>
    <property type="match status" value="1"/>
</dbReference>
<dbReference type="SUPFAM" id="SSF52304">
    <property type="entry name" value="Type II 3-dehydroquinate dehydratase"/>
    <property type="match status" value="1"/>
</dbReference>
<dbReference type="PROSITE" id="PS01029">
    <property type="entry name" value="DEHYDROQUINASE_II"/>
    <property type="match status" value="1"/>
</dbReference>
<proteinExistence type="inferred from homology"/>
<protein>
    <recommendedName>
        <fullName evidence="1">3-dehydroquinate dehydratase</fullName>
        <shortName evidence="1">3-dehydroquinase</shortName>
        <ecNumber evidence="1">4.2.1.10</ecNumber>
    </recommendedName>
    <alternativeName>
        <fullName evidence="1">Type II DHQase</fullName>
    </alternativeName>
</protein>
<accession>Q89AE0</accession>
<feature type="chain" id="PRO_0000159885" description="3-dehydroquinate dehydratase">
    <location>
        <begin position="1"/>
        <end position="154"/>
    </location>
</feature>
<feature type="active site" description="Proton acceptor" evidence="1">
    <location>
        <position position="26"/>
    </location>
</feature>
<feature type="active site" description="Proton donor" evidence="1">
    <location>
        <position position="103"/>
    </location>
</feature>
<feature type="binding site" evidence="1">
    <location>
        <position position="77"/>
    </location>
    <ligand>
        <name>substrate</name>
    </ligand>
</feature>
<feature type="binding site" evidence="1">
    <location>
        <position position="83"/>
    </location>
    <ligand>
        <name>substrate</name>
    </ligand>
</feature>
<feature type="binding site" evidence="1">
    <location>
        <position position="90"/>
    </location>
    <ligand>
        <name>substrate</name>
    </ligand>
</feature>
<feature type="binding site" evidence="1">
    <location>
        <begin position="104"/>
        <end position="105"/>
    </location>
    <ligand>
        <name>substrate</name>
    </ligand>
</feature>
<feature type="binding site" evidence="1">
    <location>
        <position position="114"/>
    </location>
    <ligand>
        <name>substrate</name>
    </ligand>
</feature>
<feature type="site" description="Transition state stabilizer" evidence="1">
    <location>
        <position position="21"/>
    </location>
</feature>
<comment type="function">
    <text evidence="1">Catalyzes a trans-dehydration via an enolate intermediate.</text>
</comment>
<comment type="catalytic activity">
    <reaction evidence="1">
        <text>3-dehydroquinate = 3-dehydroshikimate + H2O</text>
        <dbReference type="Rhea" id="RHEA:21096"/>
        <dbReference type="ChEBI" id="CHEBI:15377"/>
        <dbReference type="ChEBI" id="CHEBI:16630"/>
        <dbReference type="ChEBI" id="CHEBI:32364"/>
        <dbReference type="EC" id="4.2.1.10"/>
    </reaction>
</comment>
<comment type="pathway">
    <text evidence="1">Metabolic intermediate biosynthesis; chorismate biosynthesis; chorismate from D-erythrose 4-phosphate and phosphoenolpyruvate: step 3/7.</text>
</comment>
<comment type="subunit">
    <text evidence="1">Homododecamer.</text>
</comment>
<comment type="similarity">
    <text evidence="1">Belongs to the type-II 3-dehydroquinase family.</text>
</comment>
<keyword id="KW-0028">Amino-acid biosynthesis</keyword>
<keyword id="KW-0057">Aromatic amino acid biosynthesis</keyword>
<keyword id="KW-0456">Lyase</keyword>
<keyword id="KW-1185">Reference proteome</keyword>
<reference key="1">
    <citation type="journal article" date="2003" name="Proc. Natl. Acad. Sci. U.S.A.">
        <title>Reductive genome evolution in Buchnera aphidicola.</title>
        <authorList>
            <person name="van Ham R.C.H.J."/>
            <person name="Kamerbeek J."/>
            <person name="Palacios C."/>
            <person name="Rausell C."/>
            <person name="Abascal F."/>
            <person name="Bastolla U."/>
            <person name="Fernandez J.M."/>
            <person name="Jimenez L."/>
            <person name="Postigo M."/>
            <person name="Silva F.J."/>
            <person name="Tamames J."/>
            <person name="Viguera E."/>
            <person name="Latorre A."/>
            <person name="Valencia A."/>
            <person name="Moran F."/>
            <person name="Moya A."/>
        </authorList>
    </citation>
    <scope>NUCLEOTIDE SEQUENCE [LARGE SCALE GENOMIC DNA]</scope>
    <source>
        <strain>Bp</strain>
    </source>
</reference>
<name>AROQ_BUCBP</name>
<evidence type="ECO:0000255" key="1">
    <source>
        <dbReference type="HAMAP-Rule" id="MF_00169"/>
    </source>
</evidence>
<organism>
    <name type="scientific">Buchnera aphidicola subsp. Baizongia pistaciae (strain Bp)</name>
    <dbReference type="NCBI Taxonomy" id="224915"/>
    <lineage>
        <taxon>Bacteria</taxon>
        <taxon>Pseudomonadati</taxon>
        <taxon>Pseudomonadota</taxon>
        <taxon>Gammaproteobacteria</taxon>
        <taxon>Enterobacterales</taxon>
        <taxon>Erwiniaceae</taxon>
        <taxon>Buchnera</taxon>
    </lineage>
</organism>
<sequence length="154" mass="17329">MKELFNILLINGPNLNLLGHREPKIYGNTTLSQLTHALTKEATTFNIHLHHIQSNSESTLINKIHNSKNNINYIIINAGAFSHTSIALRDALIGINIPFIEVHISNIYTRENFRSHSWLSDISSGVICGLGLDGYFWALRTAIKRIKKISTLQV</sequence>
<gene>
    <name evidence="1" type="primary">aroQ</name>
    <name type="ordered locus">bbp_362</name>
</gene>